<reference key="1">
    <citation type="journal article" date="1996" name="J. Neurosci.">
        <title>Cloning and functional characterization of a novel dopamine receptor from Drosophila melanogaster.</title>
        <authorList>
            <person name="Feng G."/>
            <person name="Hannan F."/>
            <person name="Reale V."/>
            <person name="Hon Y.Y."/>
            <person name="Kousky C.T."/>
            <person name="Evans P.D."/>
            <person name="Hall L.M."/>
        </authorList>
    </citation>
    <scope>NUCLEOTIDE SEQUENCE [MRNA] (ISOFORM A)</scope>
    <scope>FUNCTION</scope>
    <source>
        <strain>Canton-S</strain>
        <tissue>Head</tissue>
    </source>
</reference>
<reference key="2">
    <citation type="journal article" date="1996" name="Neuron">
        <title>DAMB, a novel dopamine receptor expressed specifically in Drosophila mushroom bodies.</title>
        <authorList>
            <person name="Han K.-A."/>
            <person name="Millar N.S."/>
            <person name="Grotewiel M.S."/>
            <person name="Davis R.L."/>
        </authorList>
    </citation>
    <scope>NUCLEOTIDE SEQUENCE [MRNA] (ISOFORM B)</scope>
    <scope>FUNCTION</scope>
    <scope>TISSUE SPECIFICITY</scope>
    <source>
        <strain>Canton-S</strain>
    </source>
</reference>
<reference key="3">
    <citation type="journal article" date="2000" name="Science">
        <title>The genome sequence of Drosophila melanogaster.</title>
        <authorList>
            <person name="Adams M.D."/>
            <person name="Celniker S.E."/>
            <person name="Holt R.A."/>
            <person name="Evans C.A."/>
            <person name="Gocayne J.D."/>
            <person name="Amanatides P.G."/>
            <person name="Scherer S.E."/>
            <person name="Li P.W."/>
            <person name="Hoskins R.A."/>
            <person name="Galle R.F."/>
            <person name="George R.A."/>
            <person name="Lewis S.E."/>
            <person name="Richards S."/>
            <person name="Ashburner M."/>
            <person name="Henderson S.N."/>
            <person name="Sutton G.G."/>
            <person name="Wortman J.R."/>
            <person name="Yandell M.D."/>
            <person name="Zhang Q."/>
            <person name="Chen L.X."/>
            <person name="Brandon R.C."/>
            <person name="Rogers Y.-H.C."/>
            <person name="Blazej R.G."/>
            <person name="Champe M."/>
            <person name="Pfeiffer B.D."/>
            <person name="Wan K.H."/>
            <person name="Doyle C."/>
            <person name="Baxter E.G."/>
            <person name="Helt G."/>
            <person name="Nelson C.R."/>
            <person name="Miklos G.L.G."/>
            <person name="Abril J.F."/>
            <person name="Agbayani A."/>
            <person name="An H.-J."/>
            <person name="Andrews-Pfannkoch C."/>
            <person name="Baldwin D."/>
            <person name="Ballew R.M."/>
            <person name="Basu A."/>
            <person name="Baxendale J."/>
            <person name="Bayraktaroglu L."/>
            <person name="Beasley E.M."/>
            <person name="Beeson K.Y."/>
            <person name="Benos P.V."/>
            <person name="Berman B.P."/>
            <person name="Bhandari D."/>
            <person name="Bolshakov S."/>
            <person name="Borkova D."/>
            <person name="Botchan M.R."/>
            <person name="Bouck J."/>
            <person name="Brokstein P."/>
            <person name="Brottier P."/>
            <person name="Burtis K.C."/>
            <person name="Busam D.A."/>
            <person name="Butler H."/>
            <person name="Cadieu E."/>
            <person name="Center A."/>
            <person name="Chandra I."/>
            <person name="Cherry J.M."/>
            <person name="Cawley S."/>
            <person name="Dahlke C."/>
            <person name="Davenport L.B."/>
            <person name="Davies P."/>
            <person name="de Pablos B."/>
            <person name="Delcher A."/>
            <person name="Deng Z."/>
            <person name="Mays A.D."/>
            <person name="Dew I."/>
            <person name="Dietz S.M."/>
            <person name="Dodson K."/>
            <person name="Doup L.E."/>
            <person name="Downes M."/>
            <person name="Dugan-Rocha S."/>
            <person name="Dunkov B.C."/>
            <person name="Dunn P."/>
            <person name="Durbin K.J."/>
            <person name="Evangelista C.C."/>
            <person name="Ferraz C."/>
            <person name="Ferriera S."/>
            <person name="Fleischmann W."/>
            <person name="Fosler C."/>
            <person name="Gabrielian A.E."/>
            <person name="Garg N.S."/>
            <person name="Gelbart W.M."/>
            <person name="Glasser K."/>
            <person name="Glodek A."/>
            <person name="Gong F."/>
            <person name="Gorrell J.H."/>
            <person name="Gu Z."/>
            <person name="Guan P."/>
            <person name="Harris M."/>
            <person name="Harris N.L."/>
            <person name="Harvey D.A."/>
            <person name="Heiman T.J."/>
            <person name="Hernandez J.R."/>
            <person name="Houck J."/>
            <person name="Hostin D."/>
            <person name="Houston K.A."/>
            <person name="Howland T.J."/>
            <person name="Wei M.-H."/>
            <person name="Ibegwam C."/>
            <person name="Jalali M."/>
            <person name="Kalush F."/>
            <person name="Karpen G.H."/>
            <person name="Ke Z."/>
            <person name="Kennison J.A."/>
            <person name="Ketchum K.A."/>
            <person name="Kimmel B.E."/>
            <person name="Kodira C.D."/>
            <person name="Kraft C.L."/>
            <person name="Kravitz S."/>
            <person name="Kulp D."/>
            <person name="Lai Z."/>
            <person name="Lasko P."/>
            <person name="Lei Y."/>
            <person name="Levitsky A.A."/>
            <person name="Li J.H."/>
            <person name="Li Z."/>
            <person name="Liang Y."/>
            <person name="Lin X."/>
            <person name="Liu X."/>
            <person name="Mattei B."/>
            <person name="McIntosh T.C."/>
            <person name="McLeod M.P."/>
            <person name="McPherson D."/>
            <person name="Merkulov G."/>
            <person name="Milshina N.V."/>
            <person name="Mobarry C."/>
            <person name="Morris J."/>
            <person name="Moshrefi A."/>
            <person name="Mount S.M."/>
            <person name="Moy M."/>
            <person name="Murphy B."/>
            <person name="Murphy L."/>
            <person name="Muzny D.M."/>
            <person name="Nelson D.L."/>
            <person name="Nelson D.R."/>
            <person name="Nelson K.A."/>
            <person name="Nixon K."/>
            <person name="Nusskern D.R."/>
            <person name="Pacleb J.M."/>
            <person name="Palazzolo M."/>
            <person name="Pittman G.S."/>
            <person name="Pan S."/>
            <person name="Pollard J."/>
            <person name="Puri V."/>
            <person name="Reese M.G."/>
            <person name="Reinert K."/>
            <person name="Remington K."/>
            <person name="Saunders R.D.C."/>
            <person name="Scheeler F."/>
            <person name="Shen H."/>
            <person name="Shue B.C."/>
            <person name="Siden-Kiamos I."/>
            <person name="Simpson M."/>
            <person name="Skupski M.P."/>
            <person name="Smith T.J."/>
            <person name="Spier E."/>
            <person name="Spradling A.C."/>
            <person name="Stapleton M."/>
            <person name="Strong R."/>
            <person name="Sun E."/>
            <person name="Svirskas R."/>
            <person name="Tector C."/>
            <person name="Turner R."/>
            <person name="Venter E."/>
            <person name="Wang A.H."/>
            <person name="Wang X."/>
            <person name="Wang Z.-Y."/>
            <person name="Wassarman D.A."/>
            <person name="Weinstock G.M."/>
            <person name="Weissenbach J."/>
            <person name="Williams S.M."/>
            <person name="Woodage T."/>
            <person name="Worley K.C."/>
            <person name="Wu D."/>
            <person name="Yang S."/>
            <person name="Yao Q.A."/>
            <person name="Ye J."/>
            <person name="Yeh R.-F."/>
            <person name="Zaveri J.S."/>
            <person name="Zhan M."/>
            <person name="Zhang G."/>
            <person name="Zhao Q."/>
            <person name="Zheng L."/>
            <person name="Zheng X.H."/>
            <person name="Zhong F.N."/>
            <person name="Zhong W."/>
            <person name="Zhou X."/>
            <person name="Zhu S.C."/>
            <person name="Zhu X."/>
            <person name="Smith H.O."/>
            <person name="Gibbs R.A."/>
            <person name="Myers E.W."/>
            <person name="Rubin G.M."/>
            <person name="Venter J.C."/>
        </authorList>
    </citation>
    <scope>NUCLEOTIDE SEQUENCE [LARGE SCALE GENOMIC DNA]</scope>
    <source>
        <strain>Berkeley</strain>
    </source>
</reference>
<reference key="4">
    <citation type="journal article" date="2002" name="Genome Biol.">
        <title>Annotation of the Drosophila melanogaster euchromatic genome: a systematic review.</title>
        <authorList>
            <person name="Misra S."/>
            <person name="Crosby M.A."/>
            <person name="Mungall C.J."/>
            <person name="Matthews B.B."/>
            <person name="Campbell K.S."/>
            <person name="Hradecky P."/>
            <person name="Huang Y."/>
            <person name="Kaminker J.S."/>
            <person name="Millburn G.H."/>
            <person name="Prochnik S.E."/>
            <person name="Smith C.D."/>
            <person name="Tupy J.L."/>
            <person name="Whitfield E.J."/>
            <person name="Bayraktaroglu L."/>
            <person name="Berman B.P."/>
            <person name="Bettencourt B.R."/>
            <person name="Celniker S.E."/>
            <person name="de Grey A.D.N.J."/>
            <person name="Drysdale R.A."/>
            <person name="Harris N.L."/>
            <person name="Richter J."/>
            <person name="Russo S."/>
            <person name="Schroeder A.J."/>
            <person name="Shu S.Q."/>
            <person name="Stapleton M."/>
            <person name="Yamada C."/>
            <person name="Ashburner M."/>
            <person name="Gelbart W.M."/>
            <person name="Rubin G.M."/>
            <person name="Lewis S.E."/>
        </authorList>
    </citation>
    <scope>GENOME REANNOTATION</scope>
    <scope>ALTERNATIVE SPLICING</scope>
    <source>
        <strain>Berkeley</strain>
    </source>
</reference>
<reference key="5">
    <citation type="submission" date="2003-08" db="EMBL/GenBank/DDBJ databases">
        <authorList>
            <person name="Stapleton M."/>
            <person name="Brokstein P."/>
            <person name="Hong L."/>
            <person name="Agbayani A."/>
            <person name="Carlson J.W."/>
            <person name="Champe M."/>
            <person name="Chavez C."/>
            <person name="Dorsett V."/>
            <person name="Dresnek D."/>
            <person name="Farfan D."/>
            <person name="Frise E."/>
            <person name="George R.A."/>
            <person name="Gonzalez M."/>
            <person name="Guarin H."/>
            <person name="Kronmiller B."/>
            <person name="Li P.W."/>
            <person name="Liao G."/>
            <person name="Miranda A."/>
            <person name="Mungall C.J."/>
            <person name="Nunoo J."/>
            <person name="Pacleb J.M."/>
            <person name="Paragas V."/>
            <person name="Park S."/>
            <person name="Patel S."/>
            <person name="Phouanenavong S."/>
            <person name="Wan K.H."/>
            <person name="Yu C."/>
            <person name="Lewis S.E."/>
            <person name="Rubin G.M."/>
            <person name="Celniker S.E."/>
        </authorList>
    </citation>
    <scope>NUCLEOTIDE SEQUENCE [GENOMIC DNA] (ISOFORM B)</scope>
    <source>
        <strain>Berkeley</strain>
        <tissue>Head</tissue>
    </source>
</reference>
<protein>
    <recommendedName>
        <fullName>Dopamine receptor 2</fullName>
    </recommendedName>
    <alternativeName>
        <fullName>Dopamine 1-like receptor 2</fullName>
    </alternativeName>
</protein>
<proteinExistence type="evidence at transcript level"/>
<feature type="chain" id="PRO_0000069370" description="Dopamine receptor 2">
    <location>
        <begin position="1"/>
        <end position="539"/>
    </location>
</feature>
<feature type="topological domain" description="Extracellular" evidence="1">
    <location>
        <begin position="1"/>
        <end position="113"/>
    </location>
</feature>
<feature type="transmembrane region" description="Helical; Name=1" evidence="1">
    <location>
        <begin position="114"/>
        <end position="134"/>
    </location>
</feature>
<feature type="topological domain" description="Cytoplasmic" evidence="1">
    <location>
        <begin position="135"/>
        <end position="145"/>
    </location>
</feature>
<feature type="transmembrane region" description="Helical; Name=2" evidence="1">
    <location>
        <begin position="146"/>
        <end position="166"/>
    </location>
</feature>
<feature type="topological domain" description="Extracellular" evidence="1">
    <location>
        <begin position="167"/>
        <end position="189"/>
    </location>
</feature>
<feature type="transmembrane region" description="Helical; Name=3" evidence="1">
    <location>
        <begin position="190"/>
        <end position="206"/>
    </location>
</feature>
<feature type="topological domain" description="Cytoplasmic" evidence="1">
    <location>
        <begin position="207"/>
        <end position="227"/>
    </location>
</feature>
<feature type="transmembrane region" description="Helical; Name=4" evidence="1">
    <location>
        <begin position="228"/>
        <end position="248"/>
    </location>
</feature>
<feature type="topological domain" description="Extracellular" evidence="1">
    <location>
        <begin position="249"/>
        <end position="266"/>
    </location>
</feature>
<feature type="transmembrane region" description="Helical; Name=5" evidence="1">
    <location>
        <begin position="267"/>
        <end position="287"/>
    </location>
</feature>
<feature type="topological domain" description="Cytoplasmic" evidence="1">
    <location>
        <begin position="288"/>
        <end position="420"/>
    </location>
</feature>
<feature type="transmembrane region" description="Helical; Name=6" evidence="1">
    <location>
        <begin position="421"/>
        <end position="441"/>
    </location>
</feature>
<feature type="topological domain" description="Extracellular" evidence="1">
    <location>
        <begin position="442"/>
        <end position="453"/>
    </location>
</feature>
<feature type="transmembrane region" description="Helical; Name=7" evidence="1">
    <location>
        <begin position="454"/>
        <end position="474"/>
    </location>
</feature>
<feature type="topological domain" description="Cytoplasmic" evidence="1">
    <location>
        <begin position="475"/>
        <end position="539"/>
    </location>
</feature>
<feature type="region of interest" description="Disordered" evidence="3">
    <location>
        <begin position="326"/>
        <end position="387"/>
    </location>
</feature>
<feature type="compositionally biased region" description="Gly residues" evidence="3">
    <location>
        <begin position="337"/>
        <end position="352"/>
    </location>
</feature>
<feature type="compositionally biased region" description="Basic residues" evidence="3">
    <location>
        <begin position="356"/>
        <end position="367"/>
    </location>
</feature>
<feature type="lipid moiety-binding region" description="S-palmitoyl cysteine" evidence="1">
    <location>
        <position position="492"/>
    </location>
</feature>
<feature type="lipid moiety-binding region" description="S-palmitoyl cysteine" evidence="1">
    <location>
        <position position="493"/>
    </location>
</feature>
<feature type="glycosylation site" description="N-linked (GlcNAc...) asparagine" evidence="1">
    <location>
        <position position="5"/>
    </location>
</feature>
<feature type="glycosylation site" description="N-linked (GlcNAc...) asparagine" evidence="1">
    <location>
        <position position="31"/>
    </location>
</feature>
<feature type="glycosylation site" description="N-linked (GlcNAc...) asparagine" evidence="1">
    <location>
        <position position="47"/>
    </location>
</feature>
<feature type="glycosylation site" description="N-linked (GlcNAc...) asparagine" evidence="1">
    <location>
        <position position="68"/>
    </location>
</feature>
<feature type="disulfide bond" evidence="2">
    <location>
        <begin position="182"/>
        <end position="261"/>
    </location>
</feature>
<feature type="splice variant" id="VSP_001877" description="In isoform B." evidence="6">
    <original>RFATRRCYSTCSLHGIQHVRHNSCEQTYI</original>
    <variation>CHVAAAMVAASTSFGYHSVNQIDRTLM</variation>
    <location>
        <begin position="511"/>
        <end position="539"/>
    </location>
</feature>
<feature type="sequence conflict" description="In Ref. 5; AAQ23530." evidence="7" ref="5">
    <original>K</original>
    <variation>E</variation>
    <location>
        <position position="496"/>
    </location>
</feature>
<evidence type="ECO:0000255" key="1"/>
<evidence type="ECO:0000255" key="2">
    <source>
        <dbReference type="PROSITE-ProRule" id="PRU00521"/>
    </source>
</evidence>
<evidence type="ECO:0000256" key="3">
    <source>
        <dbReference type="SAM" id="MobiDB-lite"/>
    </source>
</evidence>
<evidence type="ECO:0000269" key="4">
    <source>
    </source>
</evidence>
<evidence type="ECO:0000269" key="5">
    <source>
    </source>
</evidence>
<evidence type="ECO:0000303" key="6">
    <source>
    </source>
</evidence>
<evidence type="ECO:0000305" key="7"/>
<accession>Q24563</accession>
<accession>Q24569</accession>
<accession>Q9VAJ8</accession>
<dbReference type="EMBL" id="U34383">
    <property type="protein sequence ID" value="AAC47161.1"/>
    <property type="molecule type" value="mRNA"/>
</dbReference>
<dbReference type="EMBL" id="U61264">
    <property type="protein sequence ID" value="AAB08000.1"/>
    <property type="molecule type" value="mRNA"/>
</dbReference>
<dbReference type="EMBL" id="AE014297">
    <property type="protein sequence ID" value="AAF56908.2"/>
    <property type="molecule type" value="Genomic_DNA"/>
</dbReference>
<dbReference type="EMBL" id="AE014297">
    <property type="protein sequence ID" value="AAN14180.1"/>
    <property type="molecule type" value="Genomic_DNA"/>
</dbReference>
<dbReference type="EMBL" id="BT010212">
    <property type="protein sequence ID" value="AAQ23530.1"/>
    <property type="molecule type" value="mRNA"/>
</dbReference>
<dbReference type="RefSeq" id="NP_524548.1">
    <molecule id="Q24563-1"/>
    <property type="nucleotide sequence ID" value="NM_079824.4"/>
</dbReference>
<dbReference type="RefSeq" id="NP_733299.1">
    <molecule id="Q24563-2"/>
    <property type="nucleotide sequence ID" value="NM_170420.2"/>
</dbReference>
<dbReference type="SMR" id="Q24563"/>
<dbReference type="BioGRID" id="68348">
    <property type="interactions" value="1"/>
</dbReference>
<dbReference type="DIP" id="DIP-22945N"/>
<dbReference type="FunCoup" id="Q24563">
    <property type="interactions" value="189"/>
</dbReference>
<dbReference type="STRING" id="7227.FBpp0303325"/>
<dbReference type="GlyCosmos" id="Q24563">
    <property type="glycosylation" value="4 sites, No reported glycans"/>
</dbReference>
<dbReference type="GlyGen" id="Q24563">
    <property type="glycosylation" value="4 sites"/>
</dbReference>
<dbReference type="PaxDb" id="7227-FBpp0084834"/>
<dbReference type="EnsemblMetazoa" id="FBtr0085467">
    <molecule id="Q24563-2"/>
    <property type="protein sequence ID" value="FBpp0084833"/>
    <property type="gene ID" value="FBgn0266137"/>
</dbReference>
<dbReference type="EnsemblMetazoa" id="FBtr0085468">
    <molecule id="Q24563-1"/>
    <property type="protein sequence ID" value="FBpp0084834"/>
    <property type="gene ID" value="FBgn0266137"/>
</dbReference>
<dbReference type="GeneID" id="43484"/>
<dbReference type="KEGG" id="dme:Dmel_CG18741"/>
<dbReference type="AGR" id="FB:FBgn0266137"/>
<dbReference type="CTD" id="43484"/>
<dbReference type="FlyBase" id="FBgn0266137">
    <property type="gene designation" value="Dop1R2"/>
</dbReference>
<dbReference type="VEuPathDB" id="VectorBase:FBgn0266137"/>
<dbReference type="eggNOG" id="KOG3656">
    <property type="taxonomic scope" value="Eukaryota"/>
</dbReference>
<dbReference type="GeneTree" id="ENSGT00940000154484"/>
<dbReference type="InParanoid" id="Q24563"/>
<dbReference type="OMA" id="DRTLMXR"/>
<dbReference type="OrthoDB" id="5957871at2759"/>
<dbReference type="PhylomeDB" id="Q24563"/>
<dbReference type="BioGRID-ORCS" id="43484">
    <property type="hits" value="0 hits in 3 CRISPR screens"/>
</dbReference>
<dbReference type="GenomeRNAi" id="43484"/>
<dbReference type="PRO" id="PR:Q24563"/>
<dbReference type="Proteomes" id="UP000000803">
    <property type="component" value="Chromosome 3R"/>
</dbReference>
<dbReference type="Bgee" id="FBgn0266137">
    <property type="expression patterns" value="Expressed in alpha'/beta' Kenyon cell (Drosophila) in insect head and 73 other cell types or tissues"/>
</dbReference>
<dbReference type="ExpressionAtlas" id="Q24563">
    <property type="expression patterns" value="baseline and differential"/>
</dbReference>
<dbReference type="GO" id="GO:0016020">
    <property type="term" value="C:membrane"/>
    <property type="evidence" value="ECO:0000250"/>
    <property type="project" value="FlyBase"/>
</dbReference>
<dbReference type="GO" id="GO:0005886">
    <property type="term" value="C:plasma membrane"/>
    <property type="evidence" value="ECO:0000250"/>
    <property type="project" value="FlyBase"/>
</dbReference>
<dbReference type="GO" id="GO:0030672">
    <property type="term" value="C:synaptic vesicle membrane"/>
    <property type="evidence" value="ECO:0000305"/>
    <property type="project" value="UniProtKB"/>
</dbReference>
<dbReference type="GO" id="GO:0004935">
    <property type="term" value="F:adrenergic receptor activity"/>
    <property type="evidence" value="ECO:0007669"/>
    <property type="project" value="InterPro"/>
</dbReference>
<dbReference type="GO" id="GO:0004952">
    <property type="term" value="F:dopamine neurotransmitter receptor activity"/>
    <property type="evidence" value="ECO:0000250"/>
    <property type="project" value="FlyBase"/>
</dbReference>
<dbReference type="GO" id="GO:0001588">
    <property type="term" value="F:dopamine neurotransmitter receptor activity, coupled via Gs"/>
    <property type="evidence" value="ECO:0000314"/>
    <property type="project" value="UniProtKB"/>
</dbReference>
<dbReference type="GO" id="GO:0008227">
    <property type="term" value="F:G protein-coupled amine receptor activity"/>
    <property type="evidence" value="ECO:0000250"/>
    <property type="project" value="FlyBase"/>
</dbReference>
<dbReference type="GO" id="GO:0004930">
    <property type="term" value="F:G protein-coupled receptor activity"/>
    <property type="evidence" value="ECO:0000318"/>
    <property type="project" value="GO_Central"/>
</dbReference>
<dbReference type="GO" id="GO:0008226">
    <property type="term" value="F:tyramine receptor activity"/>
    <property type="evidence" value="ECO:0000314"/>
    <property type="project" value="CACAO"/>
</dbReference>
<dbReference type="GO" id="GO:0071880">
    <property type="term" value="P:adenylate cyclase-activating adrenergic receptor signaling pathway"/>
    <property type="evidence" value="ECO:0000318"/>
    <property type="project" value="GO_Central"/>
</dbReference>
<dbReference type="GO" id="GO:0007191">
    <property type="term" value="P:adenylate cyclase-activating dopamine receptor signaling pathway"/>
    <property type="evidence" value="ECO:0000314"/>
    <property type="project" value="FlyBase"/>
</dbReference>
<dbReference type="GO" id="GO:1903351">
    <property type="term" value="P:cellular response to dopamine"/>
    <property type="evidence" value="ECO:0000315"/>
    <property type="project" value="FlyBase"/>
</dbReference>
<dbReference type="GO" id="GO:0007212">
    <property type="term" value="P:G protein-coupled dopamine receptor signaling pathway"/>
    <property type="evidence" value="ECO:0000250"/>
    <property type="project" value="FlyBase"/>
</dbReference>
<dbReference type="GO" id="GO:0007186">
    <property type="term" value="P:G protein-coupled receptor signaling pathway"/>
    <property type="evidence" value="ECO:0000304"/>
    <property type="project" value="UniProtKB"/>
</dbReference>
<dbReference type="GO" id="GO:0042321">
    <property type="term" value="P:negative regulation of circadian sleep/wake cycle, sleep"/>
    <property type="evidence" value="ECO:0000315"/>
    <property type="project" value="FlyBase"/>
</dbReference>
<dbReference type="GO" id="GO:0043410">
    <property type="term" value="P:positive regulation of MAPK cascade"/>
    <property type="evidence" value="ECO:0000318"/>
    <property type="project" value="GO_Central"/>
</dbReference>
<dbReference type="GO" id="GO:0099509">
    <property type="term" value="P:regulation of presynaptic cytosolic calcium ion concentration"/>
    <property type="evidence" value="ECO:0000315"/>
    <property type="project" value="FlyBase"/>
</dbReference>
<dbReference type="GO" id="GO:1990834">
    <property type="term" value="P:response to odorant"/>
    <property type="evidence" value="ECO:0000315"/>
    <property type="project" value="FlyBase"/>
</dbReference>
<dbReference type="CDD" id="cd15067">
    <property type="entry name" value="7tmA_Dop1R2-like"/>
    <property type="match status" value="1"/>
</dbReference>
<dbReference type="FunFam" id="1.20.1070.10:FF:000282">
    <property type="entry name" value="Dopamine receptor 2"/>
    <property type="match status" value="1"/>
</dbReference>
<dbReference type="Gene3D" id="1.20.1070.10">
    <property type="entry name" value="Rhodopsin 7-helix transmembrane proteins"/>
    <property type="match status" value="1"/>
</dbReference>
<dbReference type="InterPro" id="IPR002233">
    <property type="entry name" value="ADR_fam"/>
</dbReference>
<dbReference type="InterPro" id="IPR000276">
    <property type="entry name" value="GPCR_Rhodpsn"/>
</dbReference>
<dbReference type="InterPro" id="IPR017452">
    <property type="entry name" value="GPCR_Rhodpsn_7TM"/>
</dbReference>
<dbReference type="PANTHER" id="PTHR24248">
    <property type="entry name" value="ADRENERGIC RECEPTOR-RELATED G-PROTEIN COUPLED RECEPTOR"/>
    <property type="match status" value="1"/>
</dbReference>
<dbReference type="PANTHER" id="PTHR24248:SF185">
    <property type="entry name" value="DOPAMINE RECEPTOR 2"/>
    <property type="match status" value="1"/>
</dbReference>
<dbReference type="Pfam" id="PF00001">
    <property type="entry name" value="7tm_1"/>
    <property type="match status" value="1"/>
</dbReference>
<dbReference type="PRINTS" id="PR01103">
    <property type="entry name" value="ADRENERGICR"/>
</dbReference>
<dbReference type="PRINTS" id="PR00237">
    <property type="entry name" value="GPCRRHODOPSN"/>
</dbReference>
<dbReference type="SMART" id="SM01381">
    <property type="entry name" value="7TM_GPCR_Srsx"/>
    <property type="match status" value="1"/>
</dbReference>
<dbReference type="SUPFAM" id="SSF81321">
    <property type="entry name" value="Family A G protein-coupled receptor-like"/>
    <property type="match status" value="1"/>
</dbReference>
<dbReference type="PROSITE" id="PS00237">
    <property type="entry name" value="G_PROTEIN_RECEP_F1_1"/>
    <property type="match status" value="1"/>
</dbReference>
<dbReference type="PROSITE" id="PS50262">
    <property type="entry name" value="G_PROTEIN_RECEP_F1_2"/>
    <property type="match status" value="1"/>
</dbReference>
<comment type="function">
    <text evidence="4 5">Receptor for dopamine. The activity of this receptor is mediated by G proteins which activate adenylyl cyclase. Also capable of generating a calcium signal. In terms of antagonist responses, would be classed with the D1-like dopamine receptor group. This receptor is an attractive candidate for initiating biochemical cascades underlying olfactory learning.</text>
</comment>
<comment type="subcellular location">
    <subcellularLocation>
        <location>Cell membrane</location>
        <topology>Multi-pass membrane protein</topology>
    </subcellularLocation>
</comment>
<comment type="alternative products">
    <event type="alternative splicing"/>
    <isoform>
        <id>Q24563-1</id>
        <name>A</name>
        <sequence type="displayed"/>
    </isoform>
    <isoform>
        <id>Q24563-2</id>
        <name>B</name>
        <sequence type="described" ref="VSP_001877"/>
    </isoform>
</comment>
<comment type="tissue specificity">
    <text evidence="5">Expressed in both central and peripheral nervous systems.</text>
</comment>
<comment type="similarity">
    <text evidence="2">Belongs to the G-protein coupled receptor 1 family.</text>
</comment>
<organism>
    <name type="scientific">Drosophila melanogaster</name>
    <name type="common">Fruit fly</name>
    <dbReference type="NCBI Taxonomy" id="7227"/>
    <lineage>
        <taxon>Eukaryota</taxon>
        <taxon>Metazoa</taxon>
        <taxon>Ecdysozoa</taxon>
        <taxon>Arthropoda</taxon>
        <taxon>Hexapoda</taxon>
        <taxon>Insecta</taxon>
        <taxon>Pterygota</taxon>
        <taxon>Neoptera</taxon>
        <taxon>Endopterygota</taxon>
        <taxon>Diptera</taxon>
        <taxon>Brachycera</taxon>
        <taxon>Muscomorpha</taxon>
        <taxon>Ephydroidea</taxon>
        <taxon>Drosophilidae</taxon>
        <taxon>Drosophila</taxon>
        <taxon>Sophophora</taxon>
    </lineage>
</organism>
<sequence>MVDDNGSSPEVEGAEGAGAPLLALLRVDGLNQTQTRSPSPSFFGSYNISEDVYFYFNGLPTSTELVLNATTSATSATLSPAMVATGGGGTTTPEPDLSEFLEALPNDRVGLLAFLFLFSFATVFGNSLVILAVIRERYLHTATNYFITSLAVADCLVGLVVMPFSALYEVLENTWFFGTDWCDIWRSLDVLFSTASILNLCVISLDRYWAITDPFSYPMRMTVKRAAGLIAAVWICSSAISFPAIVWWRAARDGEMPAYKCTFTEHLGYLVFSSTISFYLPLLVMVFTYCRIYRAAVIQTRSLKIGTKQVLMASGELQLTLRIHRGGTTRDQQNQVSGGGGGGGGGGGGGGSLSHSHSHSHHHHHNHGGGTTTSTPEEPDDEPLSALHNNGLARHRHMGKNFSLSRKLAKFAKEKKAAKTLGIVMGVFIICWLPFFVVNLLSGFCIECIEHEEIVSAIVTWLGWINSCMNPVIYACWSRDFRRAFVRLLCMCCPRKIRRKYQPTMRSKSQRFATRRCYSTCSLHGIQHVRHNSCEQTYI</sequence>
<gene>
    <name type="primary">Dop1R2</name>
    <name type="synonym">DAMB</name>
    <name type="synonym">DopR2</name>
    <name type="synonym">DopR99B</name>
    <name type="ORF">CG18741</name>
</gene>
<keyword id="KW-0025">Alternative splicing</keyword>
<keyword id="KW-1003">Cell membrane</keyword>
<keyword id="KW-1015">Disulfide bond</keyword>
<keyword id="KW-0297">G-protein coupled receptor</keyword>
<keyword id="KW-0325">Glycoprotein</keyword>
<keyword id="KW-0449">Lipoprotein</keyword>
<keyword id="KW-0472">Membrane</keyword>
<keyword id="KW-0564">Palmitate</keyword>
<keyword id="KW-0597">Phosphoprotein</keyword>
<keyword id="KW-0675">Receptor</keyword>
<keyword id="KW-1185">Reference proteome</keyword>
<keyword id="KW-0807">Transducer</keyword>
<keyword id="KW-0812">Transmembrane</keyword>
<keyword id="KW-1133">Transmembrane helix</keyword>
<name>DOPR2_DROME</name>